<name>CC191_HUMAN</name>
<reference key="1">
    <citation type="submission" date="2002-05" db="EMBL/GenBank/DDBJ databases">
        <authorList>
            <person name="Yu L."/>
            <person name="Guo J.H."/>
        </authorList>
    </citation>
    <scope>NUCLEOTIDE SEQUENCE [LARGE SCALE MRNA] (ISOFORM 1)</scope>
    <source>
        <tissue>Kidney</tissue>
    </source>
</reference>
<reference key="2">
    <citation type="journal article" date="2004" name="Nat. Genet.">
        <title>Complete sequencing and characterization of 21,243 full-length human cDNAs.</title>
        <authorList>
            <person name="Ota T."/>
            <person name="Suzuki Y."/>
            <person name="Nishikawa T."/>
            <person name="Otsuki T."/>
            <person name="Sugiyama T."/>
            <person name="Irie R."/>
            <person name="Wakamatsu A."/>
            <person name="Hayashi K."/>
            <person name="Sato H."/>
            <person name="Nagai K."/>
            <person name="Kimura K."/>
            <person name="Makita H."/>
            <person name="Sekine M."/>
            <person name="Obayashi M."/>
            <person name="Nishi T."/>
            <person name="Shibahara T."/>
            <person name="Tanaka T."/>
            <person name="Ishii S."/>
            <person name="Yamamoto J."/>
            <person name="Saito K."/>
            <person name="Kawai Y."/>
            <person name="Isono Y."/>
            <person name="Nakamura Y."/>
            <person name="Nagahari K."/>
            <person name="Murakami K."/>
            <person name="Yasuda T."/>
            <person name="Iwayanagi T."/>
            <person name="Wagatsuma M."/>
            <person name="Shiratori A."/>
            <person name="Sudo H."/>
            <person name="Hosoiri T."/>
            <person name="Kaku Y."/>
            <person name="Kodaira H."/>
            <person name="Kondo H."/>
            <person name="Sugawara M."/>
            <person name="Takahashi M."/>
            <person name="Kanda K."/>
            <person name="Yokoi T."/>
            <person name="Furuya T."/>
            <person name="Kikkawa E."/>
            <person name="Omura Y."/>
            <person name="Abe K."/>
            <person name="Kamihara K."/>
            <person name="Katsuta N."/>
            <person name="Sato K."/>
            <person name="Tanikawa M."/>
            <person name="Yamazaki M."/>
            <person name="Ninomiya K."/>
            <person name="Ishibashi T."/>
            <person name="Yamashita H."/>
            <person name="Murakawa K."/>
            <person name="Fujimori K."/>
            <person name="Tanai H."/>
            <person name="Kimata M."/>
            <person name="Watanabe M."/>
            <person name="Hiraoka S."/>
            <person name="Chiba Y."/>
            <person name="Ishida S."/>
            <person name="Ono Y."/>
            <person name="Takiguchi S."/>
            <person name="Watanabe S."/>
            <person name="Yosida M."/>
            <person name="Hotuta T."/>
            <person name="Kusano J."/>
            <person name="Kanehori K."/>
            <person name="Takahashi-Fujii A."/>
            <person name="Hara H."/>
            <person name="Tanase T.-O."/>
            <person name="Nomura Y."/>
            <person name="Togiya S."/>
            <person name="Komai F."/>
            <person name="Hara R."/>
            <person name="Takeuchi K."/>
            <person name="Arita M."/>
            <person name="Imose N."/>
            <person name="Musashino K."/>
            <person name="Yuuki H."/>
            <person name="Oshima A."/>
            <person name="Sasaki N."/>
            <person name="Aotsuka S."/>
            <person name="Yoshikawa Y."/>
            <person name="Matsunawa H."/>
            <person name="Ichihara T."/>
            <person name="Shiohata N."/>
            <person name="Sano S."/>
            <person name="Moriya S."/>
            <person name="Momiyama H."/>
            <person name="Satoh N."/>
            <person name="Takami S."/>
            <person name="Terashima Y."/>
            <person name="Suzuki O."/>
            <person name="Nakagawa S."/>
            <person name="Senoh A."/>
            <person name="Mizoguchi H."/>
            <person name="Goto Y."/>
            <person name="Shimizu F."/>
            <person name="Wakebe H."/>
            <person name="Hishigaki H."/>
            <person name="Watanabe T."/>
            <person name="Sugiyama A."/>
            <person name="Takemoto M."/>
            <person name="Kawakami B."/>
            <person name="Yamazaki M."/>
            <person name="Watanabe K."/>
            <person name="Kumagai A."/>
            <person name="Itakura S."/>
            <person name="Fukuzumi Y."/>
            <person name="Fujimori Y."/>
            <person name="Komiyama M."/>
            <person name="Tashiro H."/>
            <person name="Tanigami A."/>
            <person name="Fujiwara T."/>
            <person name="Ono T."/>
            <person name="Yamada K."/>
            <person name="Fujii Y."/>
            <person name="Ozaki K."/>
            <person name="Hirao M."/>
            <person name="Ohmori Y."/>
            <person name="Kawabata A."/>
            <person name="Hikiji T."/>
            <person name="Kobatake N."/>
            <person name="Inagaki H."/>
            <person name="Ikema Y."/>
            <person name="Okamoto S."/>
            <person name="Okitani R."/>
            <person name="Kawakami T."/>
            <person name="Noguchi S."/>
            <person name="Itoh T."/>
            <person name="Shigeta K."/>
            <person name="Senba T."/>
            <person name="Matsumura K."/>
            <person name="Nakajima Y."/>
            <person name="Mizuno T."/>
            <person name="Morinaga M."/>
            <person name="Sasaki M."/>
            <person name="Togashi T."/>
            <person name="Oyama M."/>
            <person name="Hata H."/>
            <person name="Watanabe M."/>
            <person name="Komatsu T."/>
            <person name="Mizushima-Sugano J."/>
            <person name="Satoh T."/>
            <person name="Shirai Y."/>
            <person name="Takahashi Y."/>
            <person name="Nakagawa K."/>
            <person name="Okumura K."/>
            <person name="Nagase T."/>
            <person name="Nomura N."/>
            <person name="Kikuchi H."/>
            <person name="Masuho Y."/>
            <person name="Yamashita R."/>
            <person name="Nakai K."/>
            <person name="Yada T."/>
            <person name="Nakamura Y."/>
            <person name="Ohara O."/>
            <person name="Isogai T."/>
            <person name="Sugano S."/>
        </authorList>
    </citation>
    <scope>NUCLEOTIDE SEQUENCE [LARGE SCALE MRNA] (ISOFORM 2)</scope>
    <source>
        <tissue>Testis</tissue>
    </source>
</reference>
<reference key="3">
    <citation type="journal article" date="2006" name="Nature">
        <title>The DNA sequence, annotation and analysis of human chromosome 3.</title>
        <authorList>
            <person name="Muzny D.M."/>
            <person name="Scherer S.E."/>
            <person name="Kaul R."/>
            <person name="Wang J."/>
            <person name="Yu J."/>
            <person name="Sudbrak R."/>
            <person name="Buhay C.J."/>
            <person name="Chen R."/>
            <person name="Cree A."/>
            <person name="Ding Y."/>
            <person name="Dugan-Rocha S."/>
            <person name="Gill R."/>
            <person name="Gunaratne P."/>
            <person name="Harris R.A."/>
            <person name="Hawes A.C."/>
            <person name="Hernandez J."/>
            <person name="Hodgson A.V."/>
            <person name="Hume J."/>
            <person name="Jackson A."/>
            <person name="Khan Z.M."/>
            <person name="Kovar-Smith C."/>
            <person name="Lewis L.R."/>
            <person name="Lozado R.J."/>
            <person name="Metzker M.L."/>
            <person name="Milosavljevic A."/>
            <person name="Miner G.R."/>
            <person name="Morgan M.B."/>
            <person name="Nazareth L.V."/>
            <person name="Scott G."/>
            <person name="Sodergren E."/>
            <person name="Song X.-Z."/>
            <person name="Steffen D."/>
            <person name="Wei S."/>
            <person name="Wheeler D.A."/>
            <person name="Wright M.W."/>
            <person name="Worley K.C."/>
            <person name="Yuan Y."/>
            <person name="Zhang Z."/>
            <person name="Adams C.Q."/>
            <person name="Ansari-Lari M.A."/>
            <person name="Ayele M."/>
            <person name="Brown M.J."/>
            <person name="Chen G."/>
            <person name="Chen Z."/>
            <person name="Clendenning J."/>
            <person name="Clerc-Blankenburg K.P."/>
            <person name="Chen R."/>
            <person name="Chen Z."/>
            <person name="Davis C."/>
            <person name="Delgado O."/>
            <person name="Dinh H.H."/>
            <person name="Dong W."/>
            <person name="Draper H."/>
            <person name="Ernst S."/>
            <person name="Fu G."/>
            <person name="Gonzalez-Garay M.L."/>
            <person name="Garcia D.K."/>
            <person name="Gillett W."/>
            <person name="Gu J."/>
            <person name="Hao B."/>
            <person name="Haugen E."/>
            <person name="Havlak P."/>
            <person name="He X."/>
            <person name="Hennig S."/>
            <person name="Hu S."/>
            <person name="Huang W."/>
            <person name="Jackson L.R."/>
            <person name="Jacob L.S."/>
            <person name="Kelly S.H."/>
            <person name="Kube M."/>
            <person name="Levy R."/>
            <person name="Li Z."/>
            <person name="Liu B."/>
            <person name="Liu J."/>
            <person name="Liu W."/>
            <person name="Lu J."/>
            <person name="Maheshwari M."/>
            <person name="Nguyen B.-V."/>
            <person name="Okwuonu G.O."/>
            <person name="Palmeiri A."/>
            <person name="Pasternak S."/>
            <person name="Perez L.M."/>
            <person name="Phelps K.A."/>
            <person name="Plopper F.J."/>
            <person name="Qiang B."/>
            <person name="Raymond C."/>
            <person name="Rodriguez R."/>
            <person name="Saenphimmachak C."/>
            <person name="Santibanez J."/>
            <person name="Shen H."/>
            <person name="Shen Y."/>
            <person name="Subramanian S."/>
            <person name="Tabor P.E."/>
            <person name="Verduzco D."/>
            <person name="Waldron L."/>
            <person name="Wang J."/>
            <person name="Wang J."/>
            <person name="Wang Q."/>
            <person name="Williams G.A."/>
            <person name="Wong G.K.-S."/>
            <person name="Yao Z."/>
            <person name="Zhang J."/>
            <person name="Zhang X."/>
            <person name="Zhao G."/>
            <person name="Zhou J."/>
            <person name="Zhou Y."/>
            <person name="Nelson D."/>
            <person name="Lehrach H."/>
            <person name="Reinhardt R."/>
            <person name="Naylor S.L."/>
            <person name="Yang H."/>
            <person name="Olson M."/>
            <person name="Weinstock G."/>
            <person name="Gibbs R.A."/>
        </authorList>
    </citation>
    <scope>NUCLEOTIDE SEQUENCE [LARGE SCALE GENOMIC DNA]</scope>
</reference>
<reference key="4">
    <citation type="submission" date="2005-09" db="EMBL/GenBank/DDBJ databases">
        <authorList>
            <person name="Mural R.J."/>
            <person name="Istrail S."/>
            <person name="Sutton G.G."/>
            <person name="Florea L."/>
            <person name="Halpern A.L."/>
            <person name="Mobarry C.M."/>
            <person name="Lippert R."/>
            <person name="Walenz B."/>
            <person name="Shatkay H."/>
            <person name="Dew I."/>
            <person name="Miller J.R."/>
            <person name="Flanigan M.J."/>
            <person name="Edwards N.J."/>
            <person name="Bolanos R."/>
            <person name="Fasulo D."/>
            <person name="Halldorsson B.V."/>
            <person name="Hannenhalli S."/>
            <person name="Turner R."/>
            <person name="Yooseph S."/>
            <person name="Lu F."/>
            <person name="Nusskern D.R."/>
            <person name="Shue B.C."/>
            <person name="Zheng X.H."/>
            <person name="Zhong F."/>
            <person name="Delcher A.L."/>
            <person name="Huson D.H."/>
            <person name="Kravitz S.A."/>
            <person name="Mouchard L."/>
            <person name="Reinert K."/>
            <person name="Remington K.A."/>
            <person name="Clark A.G."/>
            <person name="Waterman M.S."/>
            <person name="Eichler E.E."/>
            <person name="Adams M.D."/>
            <person name="Hunkapiller M.W."/>
            <person name="Myers E.W."/>
            <person name="Venter J.C."/>
        </authorList>
    </citation>
    <scope>NUCLEOTIDE SEQUENCE [LARGE SCALE GENOMIC DNA]</scope>
</reference>
<reference key="5">
    <citation type="journal article" date="2000" name="DNA Res.">
        <title>Prediction of the coding sequences of unidentified human genes. XVI. The complete sequences of 150 new cDNA clones from brain which code for large proteins in vitro.</title>
        <authorList>
            <person name="Nagase T."/>
            <person name="Kikuno R."/>
            <person name="Ishikawa K."/>
            <person name="Hirosawa M."/>
            <person name="Ohara O."/>
        </authorList>
    </citation>
    <scope>NUCLEOTIDE SEQUENCE [LARGE SCALE MRNA] OF 193-936 (ISOFORM 1)</scope>
    <source>
        <tissue>Brain</tissue>
    </source>
</reference>
<organism>
    <name type="scientific">Homo sapiens</name>
    <name type="common">Human</name>
    <dbReference type="NCBI Taxonomy" id="9606"/>
    <lineage>
        <taxon>Eukaryota</taxon>
        <taxon>Metazoa</taxon>
        <taxon>Chordata</taxon>
        <taxon>Craniata</taxon>
        <taxon>Vertebrata</taxon>
        <taxon>Euteleostomi</taxon>
        <taxon>Mammalia</taxon>
        <taxon>Eutheria</taxon>
        <taxon>Euarchontoglires</taxon>
        <taxon>Primates</taxon>
        <taxon>Haplorrhini</taxon>
        <taxon>Catarrhini</taxon>
        <taxon>Hominidae</taxon>
        <taxon>Homo</taxon>
    </lineage>
</organism>
<protein>
    <recommendedName>
        <fullName>Coiled-coil domain-containing protein 191</fullName>
    </recommendedName>
</protein>
<comment type="alternative products">
    <event type="alternative splicing"/>
    <isoform>
        <id>Q8NCU4-1</id>
        <name>1</name>
        <sequence type="displayed"/>
    </isoform>
    <isoform>
        <id>Q8NCU4-2</id>
        <name>2</name>
        <sequence type="described" ref="VSP_057041 VSP_057042 VSP_057043"/>
    </isoform>
</comment>
<proteinExistence type="evidence at protein level"/>
<gene>
    <name type="primary">CCDC191</name>
    <name type="synonym">KIAA1407</name>
</gene>
<evidence type="ECO:0000255" key="1"/>
<evidence type="ECO:0000256" key="2">
    <source>
        <dbReference type="SAM" id="MobiDB-lite"/>
    </source>
</evidence>
<evidence type="ECO:0000303" key="3">
    <source>
    </source>
</evidence>
<dbReference type="EMBL" id="AK302488">
    <property type="protein sequence ID" value="BAG63773.1"/>
    <property type="molecule type" value="mRNA"/>
</dbReference>
<dbReference type="EMBL" id="AF509494">
    <property type="protein sequence ID" value="AAM34297.1"/>
    <property type="molecule type" value="mRNA"/>
</dbReference>
<dbReference type="EMBL" id="AC092896">
    <property type="status" value="NOT_ANNOTATED_CDS"/>
    <property type="molecule type" value="Genomic_DNA"/>
</dbReference>
<dbReference type="EMBL" id="AC128687">
    <property type="status" value="NOT_ANNOTATED_CDS"/>
    <property type="molecule type" value="Genomic_DNA"/>
</dbReference>
<dbReference type="EMBL" id="CH471052">
    <property type="protein sequence ID" value="EAW79615.1"/>
    <property type="molecule type" value="Genomic_DNA"/>
</dbReference>
<dbReference type="EMBL" id="AB037828">
    <property type="protein sequence ID" value="BAA92645.1"/>
    <property type="molecule type" value="mRNA"/>
</dbReference>
<dbReference type="CCDS" id="CCDS2977.1">
    <molecule id="Q8NCU4-1"/>
</dbReference>
<dbReference type="RefSeq" id="NP_065868.1">
    <molecule id="Q8NCU4-1"/>
    <property type="nucleotide sequence ID" value="NM_020817.2"/>
</dbReference>
<dbReference type="SMR" id="Q8NCU4"/>
<dbReference type="BioGRID" id="121630">
    <property type="interactions" value="7"/>
</dbReference>
<dbReference type="FunCoup" id="Q8NCU4">
    <property type="interactions" value="995"/>
</dbReference>
<dbReference type="IntAct" id="Q8NCU4">
    <property type="interactions" value="4"/>
</dbReference>
<dbReference type="STRING" id="9606.ENSP00000295878"/>
<dbReference type="iPTMnet" id="Q8NCU4"/>
<dbReference type="PhosphoSitePlus" id="Q8NCU4"/>
<dbReference type="BioMuta" id="CCDC191"/>
<dbReference type="DMDM" id="74751201"/>
<dbReference type="jPOST" id="Q8NCU4"/>
<dbReference type="MassIVE" id="Q8NCU4"/>
<dbReference type="PaxDb" id="9606-ENSP00000295878"/>
<dbReference type="PeptideAtlas" id="Q8NCU4"/>
<dbReference type="ProteomicsDB" id="5531"/>
<dbReference type="ProteomicsDB" id="72948">
    <molecule id="Q8NCU4-1"/>
</dbReference>
<dbReference type="Antibodypedia" id="52585">
    <property type="antibodies" value="9 antibodies from 6 providers"/>
</dbReference>
<dbReference type="DNASU" id="57577"/>
<dbReference type="Ensembl" id="ENST00000295878.8">
    <molecule id="Q8NCU4-1"/>
    <property type="protein sequence ID" value="ENSP00000295878.3"/>
    <property type="gene ID" value="ENSG00000163617.11"/>
</dbReference>
<dbReference type="GeneID" id="57577"/>
<dbReference type="KEGG" id="hsa:57577"/>
<dbReference type="MANE-Select" id="ENST00000295878.8">
    <property type="protein sequence ID" value="ENSP00000295878.3"/>
    <property type="RefSeq nucleotide sequence ID" value="NM_020817.2"/>
    <property type="RefSeq protein sequence ID" value="NP_065868.1"/>
</dbReference>
<dbReference type="UCSC" id="uc003eax.3">
    <molecule id="Q8NCU4-1"/>
    <property type="organism name" value="human"/>
</dbReference>
<dbReference type="AGR" id="HGNC:29272"/>
<dbReference type="CTD" id="57577"/>
<dbReference type="GeneCards" id="CCDC191"/>
<dbReference type="HGNC" id="HGNC:29272">
    <property type="gene designation" value="CCDC191"/>
</dbReference>
<dbReference type="HPA" id="ENSG00000163617">
    <property type="expression patterns" value="Low tissue specificity"/>
</dbReference>
<dbReference type="neXtProt" id="NX_Q8NCU4"/>
<dbReference type="OpenTargets" id="ENSG00000163617"/>
<dbReference type="PharmGKB" id="PA134916748"/>
<dbReference type="VEuPathDB" id="HostDB:ENSG00000163617"/>
<dbReference type="eggNOG" id="ENOG502QS57">
    <property type="taxonomic scope" value="Eukaryota"/>
</dbReference>
<dbReference type="GeneTree" id="ENSGT00940000154110"/>
<dbReference type="HOGENOM" id="CLU_015375_0_0_1"/>
<dbReference type="InParanoid" id="Q8NCU4"/>
<dbReference type="OMA" id="NRWKQFT"/>
<dbReference type="OrthoDB" id="6256972at2759"/>
<dbReference type="PAN-GO" id="Q8NCU4">
    <property type="GO annotations" value="0 GO annotations based on evolutionary models"/>
</dbReference>
<dbReference type="PhylomeDB" id="Q8NCU4"/>
<dbReference type="TreeFam" id="TF332632"/>
<dbReference type="PathwayCommons" id="Q8NCU4"/>
<dbReference type="SignaLink" id="Q8NCU4"/>
<dbReference type="BioGRID-ORCS" id="57577">
    <property type="hits" value="12 hits in 1140 CRISPR screens"/>
</dbReference>
<dbReference type="ChiTaRS" id="CCDC191">
    <property type="organism name" value="human"/>
</dbReference>
<dbReference type="GenomeRNAi" id="57577"/>
<dbReference type="Pharos" id="Q8NCU4">
    <property type="development level" value="Tdark"/>
</dbReference>
<dbReference type="PRO" id="PR:Q8NCU4"/>
<dbReference type="Proteomes" id="UP000005640">
    <property type="component" value="Chromosome 3"/>
</dbReference>
<dbReference type="RNAct" id="Q8NCU4">
    <property type="molecule type" value="protein"/>
</dbReference>
<dbReference type="Bgee" id="ENSG00000163617">
    <property type="expression patterns" value="Expressed in right uterine tube and 128 other cell types or tissues"/>
</dbReference>
<dbReference type="ExpressionAtlas" id="Q8NCU4">
    <property type="expression patterns" value="baseline and differential"/>
</dbReference>
<dbReference type="InterPro" id="IPR052270">
    <property type="entry name" value="CACF_protein"/>
</dbReference>
<dbReference type="PANTHER" id="PTHR22028:SF5">
    <property type="entry name" value="COILED-COIL DOMAIN-CONTAINING PROTEIN 191"/>
    <property type="match status" value="1"/>
</dbReference>
<dbReference type="PANTHER" id="PTHR22028">
    <property type="entry name" value="SFI1 SPINDLE BODY DOMAIN-CONTAINING PROTEIN-RELATED"/>
    <property type="match status" value="1"/>
</dbReference>
<keyword id="KW-0025">Alternative splicing</keyword>
<keyword id="KW-0175">Coiled coil</keyword>
<keyword id="KW-1267">Proteomics identification</keyword>
<keyword id="KW-1185">Reference proteome</keyword>
<sequence length="936" mass="110568">MLLAPQGRSFSKKRMGLNRWKRFTRKPSPKPTFGPDSVEHWIKRVEKASEFAVSNAFFTRNSDLPRSPWGQITDLKTSEQIEDHDEIYAEAQELVNDWLDTKLKQELASEEEGDAKNTVSSVTIMPEANGHLKYDKFDDLCGYLEEEEESTTVQKFIDHLLHKNVVDSAMMEDLGRKENQDKKQQKDPRLTMEMRHKQVKENRLRREKELEYQRIEKTLKKSAFLEAQCLVQEEKKRKALEAKKEEEEIQREMVKLRREIIERRRTVKAAWKIEKKRQEENSQNSSEKVMFQSTHILPDEEKMVKERKRKLKEVLIQTFKENQQCQKRYFAAWHKLILDHRIKLGKAGTLSDWKIQLKVLRAWRDYTRFQKLERETQALENDLREENRKQQLATEYNRKQVLRHCFTEWQHWHGAELLKRELALTKEETRKKMDALLQAASLGKLSANGLSGISLPEEATAMVGPPVKNGQETAVPPLWEKPPLGSSGCMLSPPLGRTTTGNLQGSLQNVSLSAPGNKQHKTLGAEPSQQPGSNETLRTTSQKAEPLCLGHFHNRHVFQQQLIEKQKKKLQEQQKTILELKKNLQLAEAQWAAEHALAVTEAQSHLLSKPREEEPRTCQMLVNSPVASPGTEGRSDSRNSLSGLRRKPKQLMTPHPILKAMEERAIQRAECRRILAEKKKKQEEEKLAQLKAQEEERQKREAEEKEAQLERKREEKRLKKMKELEKQKRIKRNQQLEAIAKEHYERVLLRKKGLEPWKRLRMQSKQNIQVAEEHYSLFLQRKYMLTWFQRSQESLARKMAQADQFYSQILLKRVIQSWLQYVIDLQEEVRKFCVHFLQKKIFRAWFNMVREVKIDSQGKHEIAAEHSDRRILWITLRTWKKFVKFMKEERVKEERRQQLRRKVVEILPDFQVPGRYHELYQQSDTWSLSKTSLVNE</sequence>
<accession>Q8NCU4</accession>
<accession>B4DYL1</accession>
<accession>Q9P2E0</accession>
<feature type="chain" id="PRO_0000309221" description="Coiled-coil domain-containing protein 191">
    <location>
        <begin position="1"/>
        <end position="936"/>
    </location>
</feature>
<feature type="region of interest" description="Disordered" evidence="2">
    <location>
        <begin position="495"/>
        <end position="541"/>
    </location>
</feature>
<feature type="region of interest" description="Disordered" evidence="2">
    <location>
        <begin position="607"/>
        <end position="656"/>
    </location>
</feature>
<feature type="region of interest" description="Disordered" evidence="2">
    <location>
        <begin position="691"/>
        <end position="714"/>
    </location>
</feature>
<feature type="coiled-coil region" evidence="1">
    <location>
        <begin position="189"/>
        <end position="270"/>
    </location>
</feature>
<feature type="coiled-coil region" evidence="1">
    <location>
        <begin position="364"/>
        <end position="440"/>
    </location>
</feature>
<feature type="coiled-coil region" evidence="1">
    <location>
        <begin position="554"/>
        <end position="592"/>
    </location>
</feature>
<feature type="coiled-coil region" evidence="1">
    <location>
        <begin position="662"/>
        <end position="739"/>
    </location>
</feature>
<feature type="compositionally biased region" description="Polar residues" evidence="2">
    <location>
        <begin position="497"/>
        <end position="516"/>
    </location>
</feature>
<feature type="compositionally biased region" description="Polar residues" evidence="2">
    <location>
        <begin position="527"/>
        <end position="541"/>
    </location>
</feature>
<feature type="splice variant" id="VSP_057041" description="In isoform 2." evidence="3">
    <location>
        <begin position="1"/>
        <end position="169"/>
    </location>
</feature>
<feature type="splice variant" id="VSP_057042" description="In isoform 2." evidence="3">
    <original>AMEERAIQRAECRRILAEKKKKQE</original>
    <variation>GRAVSVVALVVVIFSPRVECVHWD</variation>
    <location>
        <begin position="660"/>
        <end position="683"/>
    </location>
</feature>
<feature type="splice variant" id="VSP_057043" description="In isoform 2." evidence="3">
    <location>
        <begin position="684"/>
        <end position="936"/>
    </location>
</feature>
<feature type="sequence variant" id="VAR_036913" description="In dbSNP:rs17603649.">
    <original>R</original>
    <variation>W</variation>
    <location>
        <position position="374"/>
    </location>
</feature>
<feature type="sequence variant" id="VAR_036914" description="In dbSNP:rs6784095.">
    <original>E</original>
    <variation>D</variation>
    <location>
        <position position="696"/>
    </location>
</feature>